<comment type="function">
    <text evidence="1">Catalyzes the ATP- as well as the pyrophosphate-dependent phosphorylation of a specific serine residue in HPr, a phosphocarrier protein of the phosphoenolpyruvate-dependent sugar phosphotransferase system (PTS). HprK/P also catalyzes the pyrophosphate-producing, inorganic phosphate-dependent dephosphorylation (phosphorolysis) of seryl-phosphorylated HPr (P-Ser-HPr). The two antagonistic activities of HprK/P are regulated by several intracellular metabolites, which change their concentration in response to the absence or presence of rapidly metabolisable carbon sources (glucose, fructose, etc.) in the growth medium. Therefore, by controlling the phosphorylation state of HPr, HPrK/P is a sensor enzyme that plays a major role in the regulation of carbon metabolism and sugar transport: it mediates carbon catabolite repression (CCR), and regulates PTS-catalyzed carbohydrate uptake and inducer exclusion.</text>
</comment>
<comment type="catalytic activity">
    <reaction evidence="1">
        <text>[HPr protein]-L-serine + ATP = [HPr protein]-O-phospho-L-serine + ADP + H(+)</text>
        <dbReference type="Rhea" id="RHEA:46600"/>
        <dbReference type="Rhea" id="RHEA-COMP:11602"/>
        <dbReference type="Rhea" id="RHEA-COMP:11603"/>
        <dbReference type="ChEBI" id="CHEBI:15378"/>
        <dbReference type="ChEBI" id="CHEBI:29999"/>
        <dbReference type="ChEBI" id="CHEBI:30616"/>
        <dbReference type="ChEBI" id="CHEBI:83421"/>
        <dbReference type="ChEBI" id="CHEBI:456216"/>
    </reaction>
</comment>
<comment type="catalytic activity">
    <reaction evidence="1">
        <text>[HPr protein]-O-phospho-L-serine + phosphate + H(+) = [HPr protein]-L-serine + diphosphate</text>
        <dbReference type="Rhea" id="RHEA:46604"/>
        <dbReference type="Rhea" id="RHEA-COMP:11602"/>
        <dbReference type="Rhea" id="RHEA-COMP:11603"/>
        <dbReference type="ChEBI" id="CHEBI:15378"/>
        <dbReference type="ChEBI" id="CHEBI:29999"/>
        <dbReference type="ChEBI" id="CHEBI:33019"/>
        <dbReference type="ChEBI" id="CHEBI:43474"/>
        <dbReference type="ChEBI" id="CHEBI:83421"/>
    </reaction>
</comment>
<comment type="cofactor">
    <cofactor evidence="1">
        <name>Mg(2+)</name>
        <dbReference type="ChEBI" id="CHEBI:18420"/>
    </cofactor>
</comment>
<comment type="subunit">
    <text evidence="1">Homohexamer.</text>
</comment>
<comment type="domain">
    <text evidence="1">The Walker A ATP-binding motif also binds Pi and PPi.</text>
</comment>
<comment type="miscellaneous">
    <text evidence="1">Both phosphorylation and phosphorolysis are carried out by the same active site and suggest a common mechanism for both reactions.</text>
</comment>
<comment type="similarity">
    <text evidence="1">Belongs to the HPrK/P family.</text>
</comment>
<proteinExistence type="inferred from homology"/>
<reference key="1">
    <citation type="journal article" date="2007" name="BMC Microbiol.">
        <title>Subtle genetic changes enhance virulence of methicillin resistant and sensitive Staphylococcus aureus.</title>
        <authorList>
            <person name="Highlander S.K."/>
            <person name="Hulten K.G."/>
            <person name="Qin X."/>
            <person name="Jiang H."/>
            <person name="Yerrapragada S."/>
            <person name="Mason E.O. Jr."/>
            <person name="Shang Y."/>
            <person name="Williams T.M."/>
            <person name="Fortunov R.M."/>
            <person name="Liu Y."/>
            <person name="Igboeli O."/>
            <person name="Petrosino J."/>
            <person name="Tirumalai M."/>
            <person name="Uzman A."/>
            <person name="Fox G.E."/>
            <person name="Cardenas A.M."/>
            <person name="Muzny D.M."/>
            <person name="Hemphill L."/>
            <person name="Ding Y."/>
            <person name="Dugan S."/>
            <person name="Blyth P.R."/>
            <person name="Buhay C.J."/>
            <person name="Dinh H.H."/>
            <person name="Hawes A.C."/>
            <person name="Holder M."/>
            <person name="Kovar C.L."/>
            <person name="Lee S.L."/>
            <person name="Liu W."/>
            <person name="Nazareth L.V."/>
            <person name="Wang Q."/>
            <person name="Zhou J."/>
            <person name="Kaplan S.L."/>
            <person name="Weinstock G.M."/>
        </authorList>
    </citation>
    <scope>NUCLEOTIDE SEQUENCE [LARGE SCALE GENOMIC DNA]</scope>
    <source>
        <strain>USA300 / TCH1516</strain>
    </source>
</reference>
<dbReference type="EC" id="2.7.11.-" evidence="1"/>
<dbReference type="EC" id="2.7.4.-" evidence="1"/>
<dbReference type="EMBL" id="CP000730">
    <property type="protein sequence ID" value="ABX28809.1"/>
    <property type="molecule type" value="Genomic_DNA"/>
</dbReference>
<dbReference type="RefSeq" id="WP_000958224.1">
    <property type="nucleotide sequence ID" value="NC_010079.1"/>
</dbReference>
<dbReference type="SMR" id="A8Z036"/>
<dbReference type="KEGG" id="sax:USA300HOU_0788"/>
<dbReference type="HOGENOM" id="CLU_052030_0_1_9"/>
<dbReference type="GO" id="GO:0005524">
    <property type="term" value="F:ATP binding"/>
    <property type="evidence" value="ECO:0007669"/>
    <property type="project" value="UniProtKB-UniRule"/>
</dbReference>
<dbReference type="GO" id="GO:0000287">
    <property type="term" value="F:magnesium ion binding"/>
    <property type="evidence" value="ECO:0007669"/>
    <property type="project" value="UniProtKB-UniRule"/>
</dbReference>
<dbReference type="GO" id="GO:0000155">
    <property type="term" value="F:phosphorelay sensor kinase activity"/>
    <property type="evidence" value="ECO:0007669"/>
    <property type="project" value="InterPro"/>
</dbReference>
<dbReference type="GO" id="GO:0004674">
    <property type="term" value="F:protein serine/threonine kinase activity"/>
    <property type="evidence" value="ECO:0007669"/>
    <property type="project" value="UniProtKB-KW"/>
</dbReference>
<dbReference type="GO" id="GO:0004712">
    <property type="term" value="F:protein serine/threonine/tyrosine kinase activity"/>
    <property type="evidence" value="ECO:0007669"/>
    <property type="project" value="UniProtKB-UniRule"/>
</dbReference>
<dbReference type="GO" id="GO:0006109">
    <property type="term" value="P:regulation of carbohydrate metabolic process"/>
    <property type="evidence" value="ECO:0007669"/>
    <property type="project" value="UniProtKB-UniRule"/>
</dbReference>
<dbReference type="CDD" id="cd01918">
    <property type="entry name" value="HprK_C"/>
    <property type="match status" value="1"/>
</dbReference>
<dbReference type="FunFam" id="3.40.1390.20:FF:000002">
    <property type="entry name" value="HPr kinase/phosphorylase"/>
    <property type="match status" value="1"/>
</dbReference>
<dbReference type="FunFam" id="3.40.50.300:FF:000174">
    <property type="entry name" value="HPr kinase/phosphorylase"/>
    <property type="match status" value="1"/>
</dbReference>
<dbReference type="Gene3D" id="3.40.1390.20">
    <property type="entry name" value="HprK N-terminal domain-like"/>
    <property type="match status" value="1"/>
</dbReference>
<dbReference type="Gene3D" id="3.40.50.300">
    <property type="entry name" value="P-loop containing nucleotide triphosphate hydrolases"/>
    <property type="match status" value="1"/>
</dbReference>
<dbReference type="HAMAP" id="MF_01249">
    <property type="entry name" value="HPr_kinase"/>
    <property type="match status" value="1"/>
</dbReference>
<dbReference type="InterPro" id="IPR003755">
    <property type="entry name" value="HPr(Ser)_kin/Pase"/>
</dbReference>
<dbReference type="InterPro" id="IPR011104">
    <property type="entry name" value="Hpr_kin/Pase_C"/>
</dbReference>
<dbReference type="InterPro" id="IPR011126">
    <property type="entry name" value="Hpr_kin/Pase_Hpr_N"/>
</dbReference>
<dbReference type="InterPro" id="IPR027417">
    <property type="entry name" value="P-loop_NTPase"/>
</dbReference>
<dbReference type="InterPro" id="IPR028979">
    <property type="entry name" value="Ser_kin/Pase_Hpr-like_N_sf"/>
</dbReference>
<dbReference type="NCBIfam" id="TIGR00679">
    <property type="entry name" value="hpr-ser"/>
    <property type="match status" value="1"/>
</dbReference>
<dbReference type="PANTHER" id="PTHR30305:SF1">
    <property type="entry name" value="HPR KINASE_PHOSPHORYLASE"/>
    <property type="match status" value="1"/>
</dbReference>
<dbReference type="PANTHER" id="PTHR30305">
    <property type="entry name" value="PROTEIN YJDM-RELATED"/>
    <property type="match status" value="1"/>
</dbReference>
<dbReference type="Pfam" id="PF07475">
    <property type="entry name" value="Hpr_kinase_C"/>
    <property type="match status" value="1"/>
</dbReference>
<dbReference type="Pfam" id="PF02603">
    <property type="entry name" value="Hpr_kinase_N"/>
    <property type="match status" value="1"/>
</dbReference>
<dbReference type="SUPFAM" id="SSF75138">
    <property type="entry name" value="HprK N-terminal domain-like"/>
    <property type="match status" value="1"/>
</dbReference>
<dbReference type="SUPFAM" id="SSF53795">
    <property type="entry name" value="PEP carboxykinase-like"/>
    <property type="match status" value="1"/>
</dbReference>
<protein>
    <recommendedName>
        <fullName evidence="1">HPr kinase/phosphorylase</fullName>
        <shortName evidence="1">HPrK/P</shortName>
        <ecNumber evidence="1">2.7.11.-</ecNumber>
        <ecNumber evidence="1">2.7.4.-</ecNumber>
    </recommendedName>
    <alternativeName>
        <fullName evidence="1">HPr(Ser) kinase/phosphorylase</fullName>
    </alternativeName>
</protein>
<organism>
    <name type="scientific">Staphylococcus aureus (strain USA300 / TCH1516)</name>
    <dbReference type="NCBI Taxonomy" id="451516"/>
    <lineage>
        <taxon>Bacteria</taxon>
        <taxon>Bacillati</taxon>
        <taxon>Bacillota</taxon>
        <taxon>Bacilli</taxon>
        <taxon>Bacillales</taxon>
        <taxon>Staphylococcaceae</taxon>
        <taxon>Staphylococcus</taxon>
    </lineage>
</organism>
<evidence type="ECO:0000255" key="1">
    <source>
        <dbReference type="HAMAP-Rule" id="MF_01249"/>
    </source>
</evidence>
<sequence length="310" mass="34482">MLTTEKLVETLKLDLIAGEEGLSKPIKNADISRPGLEMAGYFSHYASDRIQLLGTTELSFYNLLPDKDRAGRMRKLCRPETPAIIVTRGLQPPEELVEAAKELNTPLIVAKDATTSLMSRLTTFLEHALAKTTSLHGVLVDVYGVGVLITGDSGIGKSETALELVKRGHRLVADDNVEIRQINKDELIGKPPKLIEHLLEIRGLGIINVMTLFGAGSILTEKRIRLNINLENWNKQKLYDRVGLNEETLSILDTEITKKTIPVRPGRNVAVIIEVAAMNYRLNIMGINTAEEFSERLNEEIIKNSHKSEE</sequence>
<keyword id="KW-0067">ATP-binding</keyword>
<keyword id="KW-0119">Carbohydrate metabolism</keyword>
<keyword id="KW-0418">Kinase</keyword>
<keyword id="KW-0460">Magnesium</keyword>
<keyword id="KW-0479">Metal-binding</keyword>
<keyword id="KW-0511">Multifunctional enzyme</keyword>
<keyword id="KW-0547">Nucleotide-binding</keyword>
<keyword id="KW-0723">Serine/threonine-protein kinase</keyword>
<keyword id="KW-0808">Transferase</keyword>
<accession>A8Z036</accession>
<feature type="chain" id="PRO_1000085798" description="HPr kinase/phosphorylase">
    <location>
        <begin position="1"/>
        <end position="310"/>
    </location>
</feature>
<feature type="region of interest" description="Important for the catalytic mechanism of both phosphorylation and dephosphorylation" evidence="1">
    <location>
        <begin position="199"/>
        <end position="208"/>
    </location>
</feature>
<feature type="region of interest" description="Important for the catalytic mechanism of dephosphorylation" evidence="1">
    <location>
        <begin position="262"/>
        <end position="267"/>
    </location>
</feature>
<feature type="active site" evidence="1">
    <location>
        <position position="136"/>
    </location>
</feature>
<feature type="active site" evidence="1">
    <location>
        <position position="157"/>
    </location>
</feature>
<feature type="active site" description="Proton acceptor; for phosphorylation activity. Proton donor; for dephosphorylation activity" evidence="1">
    <location>
        <position position="175"/>
    </location>
</feature>
<feature type="active site" evidence="1">
    <location>
        <position position="241"/>
    </location>
</feature>
<feature type="binding site" evidence="1">
    <location>
        <begin position="151"/>
        <end position="158"/>
    </location>
    <ligand>
        <name>ATP</name>
        <dbReference type="ChEBI" id="CHEBI:30616"/>
    </ligand>
</feature>
<feature type="binding site" evidence="1">
    <location>
        <position position="158"/>
    </location>
    <ligand>
        <name>Mg(2+)</name>
        <dbReference type="ChEBI" id="CHEBI:18420"/>
    </ligand>
</feature>
<feature type="binding site" evidence="1">
    <location>
        <position position="200"/>
    </location>
    <ligand>
        <name>Mg(2+)</name>
        <dbReference type="ChEBI" id="CHEBI:18420"/>
    </ligand>
</feature>
<gene>
    <name evidence="1" type="primary">hprK</name>
    <name type="ordered locus">USA300HOU_0788</name>
</gene>
<name>HPRK_STAAT</name>